<reference key="1">
    <citation type="journal article" date="2000" name="Genomics">
        <title>Cloning and characterization of the murine Toll-like receptor 5 (Tlr5) gene: sequence and mRNA expression studies in Salmonella-susceptible MOLF/Ei mice.</title>
        <authorList>
            <person name="Sebastiani G."/>
            <person name="Leveque G."/>
            <person name="Lariviere L."/>
            <person name="Laroche L."/>
            <person name="Skamene E."/>
            <person name="Gros P."/>
            <person name="Malo D."/>
        </authorList>
    </citation>
    <scope>NUCLEOTIDE SEQUENCE [MRNA]</scope>
    <scope>VARIANTS</scope>
    <source>
        <strain>C57BL/6J</strain>
        <strain>MOLF/EiJ</strain>
        <tissue>Liver</tissue>
    </source>
</reference>
<reference key="2">
    <citation type="journal article" date="2018" name="Nature">
        <title>Neonatal selection by Toll-like receptor 5 influences long-term gut microbiota composition.</title>
        <authorList>
            <person name="Fulde M."/>
            <person name="Sommer F."/>
            <person name="Chassaing B."/>
            <person name="van Vorst K."/>
            <person name="Dupont A."/>
            <person name="Hensel M."/>
            <person name="Basic M."/>
            <person name="Klopfleisch R."/>
            <person name="Rosenstiel P."/>
            <person name="Bleich A."/>
            <person name="Baeckhed F."/>
            <person name="Gewirtz A.T."/>
            <person name="Hornef M.W."/>
        </authorList>
    </citation>
    <scope>FUNCTION</scope>
    <scope>DISRUPTION PHENOTYPE</scope>
    <scope>TISSUE SPECIFICITY</scope>
</reference>
<gene>
    <name type="primary">Tlr5</name>
</gene>
<proteinExistence type="evidence at protein level"/>
<feature type="signal peptide" evidence="3">
    <location>
        <begin position="1"/>
        <end position="26"/>
    </location>
</feature>
<feature type="chain" id="PRO_0000034730" description="Toll-like receptor 5">
    <location>
        <begin position="27"/>
        <end position="859"/>
    </location>
</feature>
<feature type="topological domain" description="Extracellular" evidence="3">
    <location>
        <begin position="27"/>
        <end position="641"/>
    </location>
</feature>
<feature type="transmembrane region" description="Helical" evidence="3">
    <location>
        <begin position="642"/>
        <end position="662"/>
    </location>
</feature>
<feature type="topological domain" description="Cytoplasmic" evidence="3">
    <location>
        <begin position="663"/>
        <end position="859"/>
    </location>
</feature>
<feature type="repeat" description="LRR 1">
    <location>
        <begin position="45"/>
        <end position="69"/>
    </location>
</feature>
<feature type="repeat" description="LRR 2">
    <location>
        <begin position="72"/>
        <end position="94"/>
    </location>
</feature>
<feature type="repeat" description="LRR 3">
    <location>
        <begin position="96"/>
        <end position="118"/>
    </location>
</feature>
<feature type="repeat" description="LRR 4">
    <location>
        <begin position="121"/>
        <end position="144"/>
    </location>
</feature>
<feature type="repeat" description="LRR 5">
    <location>
        <begin position="147"/>
        <end position="167"/>
    </location>
</feature>
<feature type="repeat" description="LRR 6">
    <location>
        <begin position="172"/>
        <end position="193"/>
    </location>
</feature>
<feature type="repeat" description="LRR 7">
    <location>
        <begin position="198"/>
        <end position="212"/>
    </location>
</feature>
<feature type="repeat" description="LRR 8">
    <location>
        <begin position="215"/>
        <end position="230"/>
    </location>
</feature>
<feature type="repeat" description="LRR 9">
    <location>
        <begin position="235"/>
        <end position="236"/>
    </location>
</feature>
<feature type="repeat" description="LRR 11">
    <location>
        <begin position="261"/>
        <end position="285"/>
    </location>
</feature>
<feature type="repeat" description="LRR 12">
    <location>
        <begin position="290"/>
        <end position="302"/>
    </location>
</feature>
<feature type="repeat" description="LRR 13">
    <location>
        <begin position="314"/>
        <end position="335"/>
    </location>
</feature>
<feature type="repeat" description="LRR 14">
    <location>
        <begin position="338"/>
        <end position="356"/>
    </location>
</feature>
<feature type="repeat" description="LRR 16">
    <location>
        <begin position="386"/>
        <end position="402"/>
    </location>
</feature>
<feature type="repeat" description="LRR 17">
    <location>
        <begin position="413"/>
        <end position="432"/>
    </location>
</feature>
<feature type="repeat" description="LRR 18">
    <location>
        <begin position="450"/>
        <end position="471"/>
    </location>
</feature>
<feature type="repeat" description="LRR 19">
    <location>
        <begin position="475"/>
        <end position="496"/>
    </location>
</feature>
<feature type="repeat" description="LRR 20">
    <location>
        <begin position="504"/>
        <end position="525"/>
    </location>
</feature>
<feature type="repeat" description="LRR 21">
    <location>
        <begin position="528"/>
        <end position="547"/>
    </location>
</feature>
<feature type="repeat" description="LRR 22">
    <location>
        <begin position="550"/>
        <end position="568"/>
    </location>
</feature>
<feature type="domain" description="LRRCT">
    <location>
        <begin position="580"/>
        <end position="632"/>
    </location>
</feature>
<feature type="domain" description="TIR" evidence="4">
    <location>
        <begin position="692"/>
        <end position="837"/>
    </location>
</feature>
<feature type="modified residue" description="Phosphotyrosine" evidence="2">
    <location>
        <position position="799"/>
    </location>
</feature>
<feature type="glycosylation site" description="N-linked (GlcNAc...) asparagine" evidence="3">
    <location>
        <position position="37"/>
    </location>
</feature>
<feature type="glycosylation site" description="N-linked (GlcNAc...) asparagine" evidence="3">
    <location>
        <position position="46"/>
    </location>
</feature>
<feature type="glycosylation site" description="N-linked (GlcNAc...) asparagine" evidence="3">
    <location>
        <position position="84"/>
    </location>
</feature>
<feature type="glycosylation site" description="N-linked (GlcNAc...) asparagine" evidence="3">
    <location>
        <position position="246"/>
    </location>
</feature>
<feature type="glycosylation site" description="N-linked (GlcNAc...) asparagine" evidence="3">
    <location>
        <position position="343"/>
    </location>
</feature>
<feature type="glycosylation site" description="N-linked (GlcNAc...) asparagine" evidence="3">
    <location>
        <position position="438"/>
    </location>
</feature>
<feature type="glycosylation site" description="N-linked (GlcNAc...) asparagine" evidence="3">
    <location>
        <position position="596"/>
    </location>
</feature>
<feature type="glycosylation site" description="N-linked (GlcNAc...) asparagine" evidence="3">
    <location>
        <position position="599"/>
    </location>
</feature>
<feature type="glycosylation site" description="N-linked (GlcNAc...) asparagine" evidence="3">
    <location>
        <position position="624"/>
    </location>
</feature>
<feature type="disulfide bond" evidence="1">
    <location>
        <begin position="584"/>
        <end position="611"/>
    </location>
</feature>
<feature type="disulfide bond" evidence="1">
    <location>
        <begin position="586"/>
        <end position="630"/>
    </location>
</feature>
<feature type="sequence variant" description="In strain: MOLF/Ei.">
    <original>G</original>
    <variation>D</variation>
    <location>
        <position position="226"/>
    </location>
</feature>
<feature type="sequence variant" description="In strain: MOLF/Ei.">
    <original>A</original>
    <variation>T</variation>
    <location>
        <position position="399"/>
    </location>
</feature>
<feature type="sequence variant" description="In strain: MOLF/Ei.">
    <original>P</original>
    <variation>T</variation>
    <location>
        <position position="470"/>
    </location>
</feature>
<feature type="sequence variant" description="In strain: MOLF/Ei.">
    <original>T</original>
    <variation>A</variation>
    <location>
        <position position="482"/>
    </location>
</feature>
<feature type="sequence variant" description="In strain: MOLF/Ei.">
    <original>V</original>
    <variation>M</variation>
    <location>
        <position position="609"/>
    </location>
</feature>
<feature type="sequence variant" description="In strain: MOLF/Ei.">
    <original>G</original>
    <variation>A</variation>
    <location>
        <position position="619"/>
    </location>
</feature>
<feature type="sequence variant" description="In strain: MOLF/Ei.">
    <original>G</original>
    <variation>E</variation>
    <location>
        <position position="835"/>
    </location>
</feature>
<feature type="sequence variant" description="In strain: MOLF/Ei.">
    <original>G</original>
    <variation>A</variation>
    <location>
        <position position="843"/>
    </location>
</feature>
<comment type="function">
    <text evidence="2 5">Pattern recognition receptor (PRR) located on the cell surface that participates in the activation of innate immunity and inflammatory response. Recognizes small molecular motifs named pathogen-associated molecular pattern (PAMPs) expressed by pathogens and microbe-associated molecular patterns (MAMPs) usually expressed by resident microbiota. Upon ligand binding such as bacterial flagellins, recruits intracellular adapter proteins MYD88 and TRIF leading to NF-kappa-B activation, cytokine secretion and induction of the inflammatory response. Plays thereby an important role in the relationship between the intestinal epithelium and enteric microbes and contributes to the gut microbiota composition throughout life.</text>
</comment>
<comment type="subunit">
    <text evidence="2">Homodimer. Interacts with MYD88 (via TIR domain). Interacts with TICAM1 (via TIR domain). Interacts with UNC93B1; this interaction is essential for proper TLR5 localization to the plasma membrane.</text>
</comment>
<comment type="interaction">
    <interactant intactId="EBI-6548397">
        <id>Q9JLF7</id>
    </interactant>
    <interactant intactId="EBI-6548623">
        <id>Q56086</id>
        <label>flag</label>
    </interactant>
    <organismsDiffer>true</organismsDiffer>
    <experiments>2</experiments>
</comment>
<comment type="interaction">
    <interactant intactId="EBI-6548397">
        <id>Q9JLF7</id>
    </interactant>
    <interactant intactId="EBI-6548383">
        <id>A0A0H3NMJ6</id>
        <label>fliC</label>
    </interactant>
    <organismsDiffer>true</organismsDiffer>
    <experiments>2</experiments>
</comment>
<comment type="subcellular location">
    <subcellularLocation>
        <location evidence="1">Membrane</location>
        <topology evidence="1">Single-pass type I membrane protein</topology>
    </subcellularLocation>
</comment>
<comment type="tissue specificity">
    <text evidence="5">Highly expressed in liver (PubMed:30089902). Detected in lung and at very low levels in most other tissues.</text>
</comment>
<comment type="PTM">
    <text evidence="1">Phosphorylated at Tyr-799 upon flagellin binding; required for signaling.</text>
</comment>
<comment type="polymorphism">
    <text>The TLR5 gene lies in a locus that is associated with susceptibility to Salmonella. Inbred strains of mice can be classified into 3 categories according to their resistance to infection with S.typhimurium: susceptible (BALB/c, C57BL/6, C3H/He), intermediate (DBA/2, C75L) and resistant (A, CBA). The strain MOLF/Ei is highly susceptible to the infection, has an unique TLR5 haplotype and a lower expression of TRL5.</text>
</comment>
<comment type="disruption phenotype">
    <text evidence="5">Deficient mice exhibit a markedly altered enteric microbiota composition, with increased levels of fecal flagellin.</text>
</comment>
<comment type="similarity">
    <text evidence="6">Belongs to the Toll-like receptor family.</text>
</comment>
<organism>
    <name type="scientific">Mus musculus</name>
    <name type="common">Mouse</name>
    <dbReference type="NCBI Taxonomy" id="10090"/>
    <lineage>
        <taxon>Eukaryota</taxon>
        <taxon>Metazoa</taxon>
        <taxon>Chordata</taxon>
        <taxon>Craniata</taxon>
        <taxon>Vertebrata</taxon>
        <taxon>Euteleostomi</taxon>
        <taxon>Mammalia</taxon>
        <taxon>Eutheria</taxon>
        <taxon>Euarchontoglires</taxon>
        <taxon>Glires</taxon>
        <taxon>Rodentia</taxon>
        <taxon>Myomorpha</taxon>
        <taxon>Muroidea</taxon>
        <taxon>Muridae</taxon>
        <taxon>Murinae</taxon>
        <taxon>Mus</taxon>
        <taxon>Mus</taxon>
    </lineage>
</organism>
<accession>Q9JLF7</accession>
<protein>
    <recommendedName>
        <fullName>Toll-like receptor 5</fullName>
    </recommendedName>
</protein>
<name>TLR5_MOUSE</name>
<dbReference type="EMBL" id="AF186107">
    <property type="protein sequence ID" value="AAF65625.1"/>
    <property type="molecule type" value="mRNA"/>
</dbReference>
<dbReference type="CCDS" id="CCDS35815.1"/>
<dbReference type="RefSeq" id="NP_058624.2">
    <property type="nucleotide sequence ID" value="NM_016928.3"/>
</dbReference>
<dbReference type="SMR" id="Q9JLF7"/>
<dbReference type="BioGRID" id="207467">
    <property type="interactions" value="2"/>
</dbReference>
<dbReference type="FunCoup" id="Q9JLF7">
    <property type="interactions" value="744"/>
</dbReference>
<dbReference type="IntAct" id="Q9JLF7">
    <property type="interactions" value="6"/>
</dbReference>
<dbReference type="STRING" id="10090.ENSMUSP00000106625"/>
<dbReference type="GlyCosmos" id="Q9JLF7">
    <property type="glycosylation" value="9 sites, No reported glycans"/>
</dbReference>
<dbReference type="GlyGen" id="Q9JLF7">
    <property type="glycosylation" value="9 sites, 1 N-linked glycan (1 site)"/>
</dbReference>
<dbReference type="iPTMnet" id="Q9JLF7"/>
<dbReference type="PhosphoSitePlus" id="Q9JLF7"/>
<dbReference type="jPOST" id="Q9JLF7"/>
<dbReference type="PaxDb" id="10090-ENSMUSP00000106625"/>
<dbReference type="ProteomicsDB" id="259515"/>
<dbReference type="DNASU" id="53791"/>
<dbReference type="GeneID" id="53791"/>
<dbReference type="KEGG" id="mmu:53791"/>
<dbReference type="AGR" id="MGI:1858171"/>
<dbReference type="CTD" id="7100"/>
<dbReference type="MGI" id="MGI:1858171">
    <property type="gene designation" value="Tlr5"/>
</dbReference>
<dbReference type="eggNOG" id="KOG4641">
    <property type="taxonomic scope" value="Eukaryota"/>
</dbReference>
<dbReference type="InParanoid" id="Q9JLF7"/>
<dbReference type="OrthoDB" id="6160824at2759"/>
<dbReference type="PhylomeDB" id="Q9JLF7"/>
<dbReference type="BioGRID-ORCS" id="53791">
    <property type="hits" value="0 hits in 59 CRISPR screens"/>
</dbReference>
<dbReference type="PRO" id="PR:Q9JLF7"/>
<dbReference type="Proteomes" id="UP000000589">
    <property type="component" value="Unplaced"/>
</dbReference>
<dbReference type="RNAct" id="Q9JLF7">
    <property type="molecule type" value="protein"/>
</dbReference>
<dbReference type="GO" id="GO:0016020">
    <property type="term" value="C:membrane"/>
    <property type="evidence" value="ECO:0007669"/>
    <property type="project" value="UniProtKB-SubCell"/>
</dbReference>
<dbReference type="GO" id="GO:0004888">
    <property type="term" value="F:transmembrane signaling receptor activity"/>
    <property type="evidence" value="ECO:0007669"/>
    <property type="project" value="InterPro"/>
</dbReference>
<dbReference type="GO" id="GO:0006954">
    <property type="term" value="P:inflammatory response"/>
    <property type="evidence" value="ECO:0007669"/>
    <property type="project" value="UniProtKB-KW"/>
</dbReference>
<dbReference type="GO" id="GO:0045087">
    <property type="term" value="P:innate immune response"/>
    <property type="evidence" value="ECO:0007669"/>
    <property type="project" value="UniProtKB-KW"/>
</dbReference>
<dbReference type="GO" id="GO:0001819">
    <property type="term" value="P:positive regulation of cytokine production"/>
    <property type="evidence" value="ECO:0007669"/>
    <property type="project" value="UniProtKB-ARBA"/>
</dbReference>
<dbReference type="GO" id="GO:0032680">
    <property type="term" value="P:regulation of tumor necrosis factor production"/>
    <property type="evidence" value="ECO:0007669"/>
    <property type="project" value="UniProtKB-ARBA"/>
</dbReference>
<dbReference type="GO" id="GO:0002224">
    <property type="term" value="P:toll-like receptor signaling pathway"/>
    <property type="evidence" value="ECO:0007669"/>
    <property type="project" value="InterPro"/>
</dbReference>
<dbReference type="FunFam" id="3.40.50.10140:FF:000001">
    <property type="entry name" value="Toll-like receptor 2"/>
    <property type="match status" value="1"/>
</dbReference>
<dbReference type="FunFam" id="3.80.10.10:FF:000306">
    <property type="entry name" value="Toll-like receptor 5"/>
    <property type="match status" value="1"/>
</dbReference>
<dbReference type="FunFam" id="3.80.10.10:FF:000365">
    <property type="entry name" value="Toll-like receptor 5"/>
    <property type="match status" value="1"/>
</dbReference>
<dbReference type="FunFam" id="3.80.10.10:FF:000592">
    <property type="entry name" value="Toll-like receptor 5"/>
    <property type="match status" value="1"/>
</dbReference>
<dbReference type="Gene3D" id="3.80.10.10">
    <property type="entry name" value="Ribonuclease Inhibitor"/>
    <property type="match status" value="3"/>
</dbReference>
<dbReference type="Gene3D" id="3.40.50.10140">
    <property type="entry name" value="Toll/interleukin-1 receptor homology (TIR) domain"/>
    <property type="match status" value="1"/>
</dbReference>
<dbReference type="InterPro" id="IPR000483">
    <property type="entry name" value="Cys-rich_flank_reg_C"/>
</dbReference>
<dbReference type="InterPro" id="IPR001611">
    <property type="entry name" value="Leu-rich_rpt"/>
</dbReference>
<dbReference type="InterPro" id="IPR003591">
    <property type="entry name" value="Leu-rich_rpt_typical-subtyp"/>
</dbReference>
<dbReference type="InterPro" id="IPR032675">
    <property type="entry name" value="LRR_dom_sf"/>
</dbReference>
<dbReference type="InterPro" id="IPR000157">
    <property type="entry name" value="TIR_dom"/>
</dbReference>
<dbReference type="InterPro" id="IPR017241">
    <property type="entry name" value="Toll-like_receptor"/>
</dbReference>
<dbReference type="InterPro" id="IPR035897">
    <property type="entry name" value="Toll_tir_struct_dom_sf"/>
</dbReference>
<dbReference type="PANTHER" id="PTHR24365">
    <property type="entry name" value="TOLL-LIKE RECEPTOR"/>
    <property type="match status" value="1"/>
</dbReference>
<dbReference type="PANTHER" id="PTHR24365:SF525">
    <property type="entry name" value="TOLL-LIKE RECEPTOR 5"/>
    <property type="match status" value="1"/>
</dbReference>
<dbReference type="Pfam" id="PF00560">
    <property type="entry name" value="LRR_1"/>
    <property type="match status" value="1"/>
</dbReference>
<dbReference type="Pfam" id="PF13855">
    <property type="entry name" value="LRR_8"/>
    <property type="match status" value="4"/>
</dbReference>
<dbReference type="Pfam" id="PF01582">
    <property type="entry name" value="TIR"/>
    <property type="match status" value="1"/>
</dbReference>
<dbReference type="PIRSF" id="PIRSF037595">
    <property type="entry name" value="Toll-like_receptor"/>
    <property type="match status" value="1"/>
</dbReference>
<dbReference type="SMART" id="SM00369">
    <property type="entry name" value="LRR_TYP"/>
    <property type="match status" value="9"/>
</dbReference>
<dbReference type="SMART" id="SM00082">
    <property type="entry name" value="LRRCT"/>
    <property type="match status" value="1"/>
</dbReference>
<dbReference type="SMART" id="SM00255">
    <property type="entry name" value="TIR"/>
    <property type="match status" value="1"/>
</dbReference>
<dbReference type="SUPFAM" id="SSF52058">
    <property type="entry name" value="L domain-like"/>
    <property type="match status" value="2"/>
</dbReference>
<dbReference type="SUPFAM" id="SSF52200">
    <property type="entry name" value="Toll/Interleukin receptor TIR domain"/>
    <property type="match status" value="1"/>
</dbReference>
<dbReference type="PROSITE" id="PS51450">
    <property type="entry name" value="LRR"/>
    <property type="match status" value="14"/>
</dbReference>
<dbReference type="PROSITE" id="PS50104">
    <property type="entry name" value="TIR"/>
    <property type="match status" value="1"/>
</dbReference>
<keyword id="KW-1015">Disulfide bond</keyword>
<keyword id="KW-0325">Glycoprotein</keyword>
<keyword id="KW-0391">Immunity</keyword>
<keyword id="KW-0395">Inflammatory response</keyword>
<keyword id="KW-0399">Innate immunity</keyword>
<keyword id="KW-0433">Leucine-rich repeat</keyword>
<keyword id="KW-0472">Membrane</keyword>
<keyword id="KW-0597">Phosphoprotein</keyword>
<keyword id="KW-0675">Receptor</keyword>
<keyword id="KW-1185">Reference proteome</keyword>
<keyword id="KW-0677">Repeat</keyword>
<keyword id="KW-0732">Signal</keyword>
<keyword id="KW-0812">Transmembrane</keyword>
<keyword id="KW-1133">Transmembrane helix</keyword>
<sequence length="859" mass="97627">MACQLDLLIGVIFMASPVLVISPCSSDGRIAFFRGCNLTQIPWILNTTTERLLLSFNYISMVVATSFPLLERLQLLELGTQYANLTIGPGAFRNLPNLRILDLGQSQIEVLNRDAFQGLPHLLELRLFSCGLSSAVLSDGYFRNLYSLARLDLSGNQIHSLRLHSSFRELNSLSDVNFAFNQIFTICEDELEPLQGKTLSFFGLKLTKLFSRVSVGWETCRNPFRGVRLETLDLSENGWTVDITRNFSNIIQGSQISSLILKHHIMGPGFGFQNIRDPDQSTFASLARSSVLQLDLSHGFIFSLNPRLFGTLKDLKMLNLAFNKINKIGENAFYGLDSLQVLNLSYNLLGELYNSNFYGLPRVAYVDLQRNHIGIIQDQTFRLLKTLQTLDLRDNALKAIGFIPSIQMVLLGGNKLVHLPHIHFTANFLELSENRLENLSDLYFLLRVPQLQFLILNQNRLSSCKAAHTPSENPSLEQLFLTENMLQLAWETGLCWDVFQGLSRLQILYLSNNYLNFLPPGIFNDLVALRMLSLSANKLTVLSPGSLPANLEILDISRNQLLCPDPALFSSLRVLDITHNEFVCNCELSTFISWLNQTNVTLFGSPADVYCMYPNSLLGGSLYNISTEDCDEEEAMRSLKFSLFILCTVTLTLFLVITLVVIKFRGICFLCYKTIQKLVFKDKVWSLEPGAYRYDAYFCFSSKDFEWAQNALLKHLDAHYSSRNRLRLCFEERDFIPGENHISNIQAAVWGSRKTVCLVSRHFLKDGWCLEAFRYAQSRSLSDLKSILIVVVVGSLSQYQLMRHETIRGFLQKQQYLRWPEDLQDVGWFLDKLSGCILKEEKGKKRSSSIQLRTIATIS</sequence>
<evidence type="ECO:0000250" key="1"/>
<evidence type="ECO:0000250" key="2">
    <source>
        <dbReference type="UniProtKB" id="O60602"/>
    </source>
</evidence>
<evidence type="ECO:0000255" key="3"/>
<evidence type="ECO:0000255" key="4">
    <source>
        <dbReference type="PROSITE-ProRule" id="PRU00204"/>
    </source>
</evidence>
<evidence type="ECO:0000269" key="5">
    <source>
    </source>
</evidence>
<evidence type="ECO:0000305" key="6"/>